<dbReference type="EC" id="3.4.21.92" evidence="1"/>
<dbReference type="EMBL" id="CP000661">
    <property type="protein sequence ID" value="ABP70342.1"/>
    <property type="molecule type" value="Genomic_DNA"/>
</dbReference>
<dbReference type="SMR" id="A4WSH8"/>
<dbReference type="STRING" id="349102.Rsph17025_1448"/>
<dbReference type="MEROPS" id="S14.001"/>
<dbReference type="KEGG" id="rsq:Rsph17025_1448"/>
<dbReference type="eggNOG" id="COG0740">
    <property type="taxonomic scope" value="Bacteria"/>
</dbReference>
<dbReference type="HOGENOM" id="CLU_058707_3_2_5"/>
<dbReference type="BioCyc" id="RSPH349102:G1G8M-1489-MONOMER"/>
<dbReference type="GO" id="GO:0005737">
    <property type="term" value="C:cytoplasm"/>
    <property type="evidence" value="ECO:0007669"/>
    <property type="project" value="UniProtKB-SubCell"/>
</dbReference>
<dbReference type="GO" id="GO:0009368">
    <property type="term" value="C:endopeptidase Clp complex"/>
    <property type="evidence" value="ECO:0007669"/>
    <property type="project" value="TreeGrafter"/>
</dbReference>
<dbReference type="GO" id="GO:0004176">
    <property type="term" value="F:ATP-dependent peptidase activity"/>
    <property type="evidence" value="ECO:0007669"/>
    <property type="project" value="InterPro"/>
</dbReference>
<dbReference type="GO" id="GO:0051117">
    <property type="term" value="F:ATPase binding"/>
    <property type="evidence" value="ECO:0007669"/>
    <property type="project" value="TreeGrafter"/>
</dbReference>
<dbReference type="GO" id="GO:0004252">
    <property type="term" value="F:serine-type endopeptidase activity"/>
    <property type="evidence" value="ECO:0007669"/>
    <property type="project" value="UniProtKB-UniRule"/>
</dbReference>
<dbReference type="GO" id="GO:0006515">
    <property type="term" value="P:protein quality control for misfolded or incompletely synthesized proteins"/>
    <property type="evidence" value="ECO:0007669"/>
    <property type="project" value="TreeGrafter"/>
</dbReference>
<dbReference type="CDD" id="cd07017">
    <property type="entry name" value="S14_ClpP_2"/>
    <property type="match status" value="1"/>
</dbReference>
<dbReference type="FunFam" id="3.90.226.10:FF:000001">
    <property type="entry name" value="ATP-dependent Clp protease proteolytic subunit"/>
    <property type="match status" value="1"/>
</dbReference>
<dbReference type="Gene3D" id="3.90.226.10">
    <property type="entry name" value="2-enoyl-CoA Hydratase, Chain A, domain 1"/>
    <property type="match status" value="1"/>
</dbReference>
<dbReference type="HAMAP" id="MF_00444">
    <property type="entry name" value="ClpP"/>
    <property type="match status" value="1"/>
</dbReference>
<dbReference type="InterPro" id="IPR001907">
    <property type="entry name" value="ClpP"/>
</dbReference>
<dbReference type="InterPro" id="IPR029045">
    <property type="entry name" value="ClpP/crotonase-like_dom_sf"/>
</dbReference>
<dbReference type="InterPro" id="IPR023562">
    <property type="entry name" value="ClpP/TepA"/>
</dbReference>
<dbReference type="InterPro" id="IPR033135">
    <property type="entry name" value="ClpP_His_AS"/>
</dbReference>
<dbReference type="InterPro" id="IPR018215">
    <property type="entry name" value="ClpP_Ser_AS"/>
</dbReference>
<dbReference type="NCBIfam" id="NF001368">
    <property type="entry name" value="PRK00277.1"/>
    <property type="match status" value="1"/>
</dbReference>
<dbReference type="NCBIfam" id="NF009205">
    <property type="entry name" value="PRK12553.1"/>
    <property type="match status" value="1"/>
</dbReference>
<dbReference type="PANTHER" id="PTHR10381">
    <property type="entry name" value="ATP-DEPENDENT CLP PROTEASE PROTEOLYTIC SUBUNIT"/>
    <property type="match status" value="1"/>
</dbReference>
<dbReference type="PANTHER" id="PTHR10381:SF70">
    <property type="entry name" value="ATP-DEPENDENT CLP PROTEASE PROTEOLYTIC SUBUNIT"/>
    <property type="match status" value="1"/>
</dbReference>
<dbReference type="Pfam" id="PF00574">
    <property type="entry name" value="CLP_protease"/>
    <property type="match status" value="1"/>
</dbReference>
<dbReference type="PRINTS" id="PR00127">
    <property type="entry name" value="CLPPROTEASEP"/>
</dbReference>
<dbReference type="SUPFAM" id="SSF52096">
    <property type="entry name" value="ClpP/crotonase"/>
    <property type="match status" value="1"/>
</dbReference>
<dbReference type="PROSITE" id="PS00382">
    <property type="entry name" value="CLP_PROTEASE_HIS"/>
    <property type="match status" value="1"/>
</dbReference>
<dbReference type="PROSITE" id="PS00381">
    <property type="entry name" value="CLP_PROTEASE_SER"/>
    <property type="match status" value="1"/>
</dbReference>
<organism>
    <name type="scientific">Cereibacter sphaeroides (strain ATCC 17025 / ATH 2.4.3)</name>
    <name type="common">Rhodobacter sphaeroides</name>
    <dbReference type="NCBI Taxonomy" id="349102"/>
    <lineage>
        <taxon>Bacteria</taxon>
        <taxon>Pseudomonadati</taxon>
        <taxon>Pseudomonadota</taxon>
        <taxon>Alphaproteobacteria</taxon>
        <taxon>Rhodobacterales</taxon>
        <taxon>Paracoccaceae</taxon>
        <taxon>Cereibacter</taxon>
    </lineage>
</organism>
<reference key="1">
    <citation type="submission" date="2007-04" db="EMBL/GenBank/DDBJ databases">
        <title>Complete sequence of chromosome of Rhodobacter sphaeroides ATCC 17025.</title>
        <authorList>
            <consortium name="US DOE Joint Genome Institute"/>
            <person name="Copeland A."/>
            <person name="Lucas S."/>
            <person name="Lapidus A."/>
            <person name="Barry K."/>
            <person name="Detter J.C."/>
            <person name="Glavina del Rio T."/>
            <person name="Hammon N."/>
            <person name="Israni S."/>
            <person name="Dalin E."/>
            <person name="Tice H."/>
            <person name="Pitluck S."/>
            <person name="Chertkov O."/>
            <person name="Brettin T."/>
            <person name="Bruce D."/>
            <person name="Han C."/>
            <person name="Schmutz J."/>
            <person name="Larimer F."/>
            <person name="Land M."/>
            <person name="Hauser L."/>
            <person name="Kyrpides N."/>
            <person name="Kim E."/>
            <person name="Richardson P."/>
            <person name="Mackenzie C."/>
            <person name="Choudhary M."/>
            <person name="Donohue T.J."/>
            <person name="Kaplan S."/>
        </authorList>
    </citation>
    <scope>NUCLEOTIDE SEQUENCE [LARGE SCALE GENOMIC DNA]</scope>
    <source>
        <strain>ATCC 17025 / ATH 2.4.3</strain>
    </source>
</reference>
<evidence type="ECO:0000255" key="1">
    <source>
        <dbReference type="HAMAP-Rule" id="MF_00444"/>
    </source>
</evidence>
<keyword id="KW-0963">Cytoplasm</keyword>
<keyword id="KW-0378">Hydrolase</keyword>
<keyword id="KW-0645">Protease</keyword>
<keyword id="KW-0720">Serine protease</keyword>
<proteinExistence type="inferred from homology"/>
<protein>
    <recommendedName>
        <fullName evidence="1">ATP-dependent Clp protease proteolytic subunit</fullName>
        <ecNumber evidence="1">3.4.21.92</ecNumber>
    </recommendedName>
    <alternativeName>
        <fullName evidence="1">Endopeptidase Clp</fullName>
    </alternativeName>
</protein>
<sequence>MKDPIDLYMNTLVPMVVEQTSRGERAYDIFSRMLKERIIFLSGPVHDGMSSLICAQLLFLEAENPSKEIAMYINSPGGVVTSGLSIYDTMQYIRPKVSTLVIGQAASMGSLLLTAGEKGMRFSLPNSRVMVHQPSGGYQGQATDIMIHARETEKLKRRLNEIYVKHTGQDLDTVEAALERDNFMSAEDAKAWGLIDEILESRGKTDDTAK</sequence>
<name>CLPP_CERS5</name>
<accession>A4WSH8</accession>
<gene>
    <name evidence="1" type="primary">clpP</name>
    <name type="ordered locus">Rsph17025_1448</name>
</gene>
<feature type="chain" id="PRO_1000026120" description="ATP-dependent Clp protease proteolytic subunit">
    <location>
        <begin position="1"/>
        <end position="210"/>
    </location>
</feature>
<feature type="active site" description="Nucleophile" evidence="1">
    <location>
        <position position="107"/>
    </location>
</feature>
<feature type="active site" evidence="1">
    <location>
        <position position="132"/>
    </location>
</feature>
<comment type="function">
    <text evidence="1">Cleaves peptides in various proteins in a process that requires ATP hydrolysis. Has a chymotrypsin-like activity. Plays a major role in the degradation of misfolded proteins.</text>
</comment>
<comment type="catalytic activity">
    <reaction evidence="1">
        <text>Hydrolysis of proteins to small peptides in the presence of ATP and magnesium. alpha-casein is the usual test substrate. In the absence of ATP, only oligopeptides shorter than five residues are hydrolyzed (such as succinyl-Leu-Tyr-|-NHMec, and Leu-Tyr-Leu-|-Tyr-Trp, in which cleavage of the -Tyr-|-Leu- and -Tyr-|-Trp bonds also occurs).</text>
        <dbReference type="EC" id="3.4.21.92"/>
    </reaction>
</comment>
<comment type="subunit">
    <text evidence="1">Fourteen ClpP subunits assemble into 2 heptameric rings which stack back to back to give a disk-like structure with a central cavity, resembling the structure of eukaryotic proteasomes.</text>
</comment>
<comment type="subcellular location">
    <subcellularLocation>
        <location evidence="1">Cytoplasm</location>
    </subcellularLocation>
</comment>
<comment type="similarity">
    <text evidence="1">Belongs to the peptidase S14 family.</text>
</comment>